<organism>
    <name type="scientific">Staphylococcus haemolyticus (strain JCSC1435)</name>
    <dbReference type="NCBI Taxonomy" id="279808"/>
    <lineage>
        <taxon>Bacteria</taxon>
        <taxon>Bacillati</taxon>
        <taxon>Bacillota</taxon>
        <taxon>Bacilli</taxon>
        <taxon>Bacillales</taxon>
        <taxon>Staphylococcaceae</taxon>
        <taxon>Staphylococcus</taxon>
    </lineage>
</organism>
<gene>
    <name evidence="1" type="primary">pxpA</name>
    <name type="ordered locus">SH1314</name>
</gene>
<protein>
    <recommendedName>
        <fullName evidence="1">5-oxoprolinase subunit A</fullName>
        <shortName evidence="1">5-OPase subunit A</shortName>
        <ecNumber evidence="1">3.5.2.9</ecNumber>
    </recommendedName>
    <alternativeName>
        <fullName evidence="1">5-oxoprolinase (ATP-hydrolyzing) subunit A</fullName>
    </alternativeName>
</protein>
<reference key="1">
    <citation type="journal article" date="2005" name="J. Bacteriol.">
        <title>Whole-genome sequencing of Staphylococcus haemolyticus uncovers the extreme plasticity of its genome and the evolution of human-colonizing staphylococcal species.</title>
        <authorList>
            <person name="Takeuchi F."/>
            <person name="Watanabe S."/>
            <person name="Baba T."/>
            <person name="Yuzawa H."/>
            <person name="Ito T."/>
            <person name="Morimoto Y."/>
            <person name="Kuroda M."/>
            <person name="Cui L."/>
            <person name="Takahashi M."/>
            <person name="Ankai A."/>
            <person name="Baba S."/>
            <person name="Fukui S."/>
            <person name="Lee J.C."/>
            <person name="Hiramatsu K."/>
        </authorList>
    </citation>
    <scope>NUCLEOTIDE SEQUENCE [LARGE SCALE GENOMIC DNA]</scope>
    <source>
        <strain>JCSC1435</strain>
    </source>
</reference>
<proteinExistence type="inferred from homology"/>
<comment type="function">
    <text evidence="1">Catalyzes the cleavage of 5-oxoproline to form L-glutamate coupled to the hydrolysis of ATP to ADP and inorganic phosphate.</text>
</comment>
<comment type="catalytic activity">
    <reaction evidence="1">
        <text>5-oxo-L-proline + ATP + 2 H2O = L-glutamate + ADP + phosphate + H(+)</text>
        <dbReference type="Rhea" id="RHEA:10348"/>
        <dbReference type="ChEBI" id="CHEBI:15377"/>
        <dbReference type="ChEBI" id="CHEBI:15378"/>
        <dbReference type="ChEBI" id="CHEBI:29985"/>
        <dbReference type="ChEBI" id="CHEBI:30616"/>
        <dbReference type="ChEBI" id="CHEBI:43474"/>
        <dbReference type="ChEBI" id="CHEBI:58402"/>
        <dbReference type="ChEBI" id="CHEBI:456216"/>
        <dbReference type="EC" id="3.5.2.9"/>
    </reaction>
</comment>
<comment type="subunit">
    <text evidence="1">Forms a complex composed of PxpA, PxpB and PxpC.</text>
</comment>
<comment type="similarity">
    <text evidence="1">Belongs to the LamB/PxpA family.</text>
</comment>
<dbReference type="EC" id="3.5.2.9" evidence="1"/>
<dbReference type="EMBL" id="AP006716">
    <property type="protein sequence ID" value="BAE04623.1"/>
    <property type="molecule type" value="Genomic_DNA"/>
</dbReference>
<dbReference type="RefSeq" id="WP_011275612.1">
    <property type="nucleotide sequence ID" value="NC_007168.1"/>
</dbReference>
<dbReference type="SMR" id="Q4L6V2"/>
<dbReference type="GeneID" id="93780716"/>
<dbReference type="KEGG" id="sha:SH1314"/>
<dbReference type="eggNOG" id="COG1540">
    <property type="taxonomic scope" value="Bacteria"/>
</dbReference>
<dbReference type="HOGENOM" id="CLU_069535_0_0_9"/>
<dbReference type="OrthoDB" id="9773478at2"/>
<dbReference type="Proteomes" id="UP000000543">
    <property type="component" value="Chromosome"/>
</dbReference>
<dbReference type="GO" id="GO:0017168">
    <property type="term" value="F:5-oxoprolinase (ATP-hydrolyzing) activity"/>
    <property type="evidence" value="ECO:0007669"/>
    <property type="project" value="UniProtKB-UniRule"/>
</dbReference>
<dbReference type="GO" id="GO:0005524">
    <property type="term" value="F:ATP binding"/>
    <property type="evidence" value="ECO:0007669"/>
    <property type="project" value="UniProtKB-UniRule"/>
</dbReference>
<dbReference type="GO" id="GO:0005975">
    <property type="term" value="P:carbohydrate metabolic process"/>
    <property type="evidence" value="ECO:0007669"/>
    <property type="project" value="InterPro"/>
</dbReference>
<dbReference type="CDD" id="cd10787">
    <property type="entry name" value="LamB_YcsF_like"/>
    <property type="match status" value="1"/>
</dbReference>
<dbReference type="Gene3D" id="3.20.20.370">
    <property type="entry name" value="Glycoside hydrolase/deacetylase"/>
    <property type="match status" value="1"/>
</dbReference>
<dbReference type="HAMAP" id="MF_00691">
    <property type="entry name" value="PxpA"/>
    <property type="match status" value="1"/>
</dbReference>
<dbReference type="InterPro" id="IPR011330">
    <property type="entry name" value="Glyco_hydro/deAcase_b/a-brl"/>
</dbReference>
<dbReference type="InterPro" id="IPR005501">
    <property type="entry name" value="LamB/YcsF/PxpA-like"/>
</dbReference>
<dbReference type="NCBIfam" id="NF003813">
    <property type="entry name" value="PRK05406.1-2"/>
    <property type="match status" value="1"/>
</dbReference>
<dbReference type="NCBIfam" id="NF003814">
    <property type="entry name" value="PRK05406.1-3"/>
    <property type="match status" value="1"/>
</dbReference>
<dbReference type="NCBIfam" id="NF003816">
    <property type="entry name" value="PRK05406.1-5"/>
    <property type="match status" value="1"/>
</dbReference>
<dbReference type="PANTHER" id="PTHR30292:SF0">
    <property type="entry name" value="5-OXOPROLINASE SUBUNIT A"/>
    <property type="match status" value="1"/>
</dbReference>
<dbReference type="PANTHER" id="PTHR30292">
    <property type="entry name" value="UNCHARACTERIZED PROTEIN YBGL-RELATED"/>
    <property type="match status" value="1"/>
</dbReference>
<dbReference type="Pfam" id="PF03746">
    <property type="entry name" value="LamB_YcsF"/>
    <property type="match status" value="1"/>
</dbReference>
<dbReference type="SUPFAM" id="SSF88713">
    <property type="entry name" value="Glycoside hydrolase/deacetylase"/>
    <property type="match status" value="1"/>
</dbReference>
<accession>Q4L6V2</accession>
<feature type="chain" id="PRO_0000185051" description="5-oxoprolinase subunit A">
    <location>
        <begin position="1"/>
        <end position="250"/>
    </location>
</feature>
<keyword id="KW-0067">ATP-binding</keyword>
<keyword id="KW-0378">Hydrolase</keyword>
<keyword id="KW-0547">Nucleotide-binding</keyword>
<evidence type="ECO:0000255" key="1">
    <source>
        <dbReference type="HAMAP-Rule" id="MF_00691"/>
    </source>
</evidence>
<sequence length="250" mass="27286">MRIDLNCDLGEAFGNYSFGGDNQIIPLITSANIACGFHAGDENVMYDTIKLVKDNGVGIGAHPGLPDLKGFGRRNMDITPKEIYNLVVYQLGALDGFCKVHQTRINHVKPHGALYNMGAKDKNIAHAIAQAVYDFDSSLILVGLSNTLLITEAESLGLRTASEVFADRRYEDNGQLVSRKEADAVITNTEEALDQVLKMVIENKVVSKNGKEIDLKADTICVHGDGAHALEFVSQIREKLTKEGIDIQSL</sequence>
<name>PXPA_STAHJ</name>